<evidence type="ECO:0000255" key="1">
    <source>
        <dbReference type="HAMAP-Rule" id="MF_01335"/>
    </source>
</evidence>
<keyword id="KW-0001">2Fe-2S</keyword>
<keyword id="KW-1015">Disulfide bond</keyword>
<keyword id="KW-0249">Electron transport</keyword>
<keyword id="KW-0408">Iron</keyword>
<keyword id="KW-0411">Iron-sulfur</keyword>
<keyword id="KW-0472">Membrane</keyword>
<keyword id="KW-0479">Metal-binding</keyword>
<keyword id="KW-0793">Thylakoid</keyword>
<keyword id="KW-1278">Translocase</keyword>
<keyword id="KW-0812">Transmembrane</keyword>
<keyword id="KW-1133">Transmembrane helix</keyword>
<keyword id="KW-0813">Transport</keyword>
<dbReference type="EC" id="7.1.1.6" evidence="1"/>
<dbReference type="EMBL" id="J03855">
    <property type="protein sequence ID" value="AAA23332.1"/>
    <property type="molecule type" value="Genomic_DNA"/>
</dbReference>
<dbReference type="SMR" id="P14698"/>
<dbReference type="GO" id="GO:0031676">
    <property type="term" value="C:plasma membrane-derived thylakoid membrane"/>
    <property type="evidence" value="ECO:0007669"/>
    <property type="project" value="UniProtKB-SubCell"/>
</dbReference>
<dbReference type="GO" id="GO:0051537">
    <property type="term" value="F:2 iron, 2 sulfur cluster binding"/>
    <property type="evidence" value="ECO:0007669"/>
    <property type="project" value="UniProtKB-KW"/>
</dbReference>
<dbReference type="GO" id="GO:0045158">
    <property type="term" value="F:electron transporter, transferring electrons within cytochrome b6/f complex of photosystem II activity"/>
    <property type="evidence" value="ECO:0007669"/>
    <property type="project" value="UniProtKB-UniRule"/>
</dbReference>
<dbReference type="GO" id="GO:0046872">
    <property type="term" value="F:metal ion binding"/>
    <property type="evidence" value="ECO:0007669"/>
    <property type="project" value="UniProtKB-KW"/>
</dbReference>
<dbReference type="GO" id="GO:0004497">
    <property type="term" value="F:monooxygenase activity"/>
    <property type="evidence" value="ECO:0007669"/>
    <property type="project" value="UniProtKB-ARBA"/>
</dbReference>
<dbReference type="GO" id="GO:0016705">
    <property type="term" value="F:oxidoreductase activity, acting on paired donors, with incorporation or reduction of molecular oxygen"/>
    <property type="evidence" value="ECO:0007669"/>
    <property type="project" value="UniProtKB-ARBA"/>
</dbReference>
<dbReference type="GO" id="GO:0009496">
    <property type="term" value="F:plastoquinol--plastocyanin reductase activity"/>
    <property type="evidence" value="ECO:0007669"/>
    <property type="project" value="UniProtKB-UniRule"/>
</dbReference>
<dbReference type="GO" id="GO:0015979">
    <property type="term" value="P:photosynthesis"/>
    <property type="evidence" value="ECO:0007669"/>
    <property type="project" value="UniProtKB-UniRule"/>
</dbReference>
<dbReference type="CDD" id="cd03471">
    <property type="entry name" value="Rieske_cytochrome_b6f"/>
    <property type="match status" value="1"/>
</dbReference>
<dbReference type="FunFam" id="2.102.10.10:FF:000007">
    <property type="entry name" value="Cytochrome b6-f complex iron-sulfur subunit"/>
    <property type="match status" value="1"/>
</dbReference>
<dbReference type="Gene3D" id="2.102.10.10">
    <property type="entry name" value="Rieske [2Fe-2S] iron-sulphur domain"/>
    <property type="match status" value="1"/>
</dbReference>
<dbReference type="Gene3D" id="1.20.5.700">
    <property type="entry name" value="Single helix bin"/>
    <property type="match status" value="1"/>
</dbReference>
<dbReference type="HAMAP" id="MF_01335">
    <property type="entry name" value="Cytb6_f_Rieske"/>
    <property type="match status" value="1"/>
</dbReference>
<dbReference type="InterPro" id="IPR023960">
    <property type="entry name" value="Cyt_b6_f_Rieske"/>
</dbReference>
<dbReference type="InterPro" id="IPR017941">
    <property type="entry name" value="Rieske_2Fe-2S"/>
</dbReference>
<dbReference type="InterPro" id="IPR036922">
    <property type="entry name" value="Rieske_2Fe-2S_sf"/>
</dbReference>
<dbReference type="InterPro" id="IPR014349">
    <property type="entry name" value="Rieske_Fe-S_prot"/>
</dbReference>
<dbReference type="InterPro" id="IPR005805">
    <property type="entry name" value="Rieske_Fe-S_prot_C"/>
</dbReference>
<dbReference type="NCBIfam" id="NF045928">
    <property type="entry name" value="Cytb6fFeSPetC"/>
    <property type="match status" value="1"/>
</dbReference>
<dbReference type="NCBIfam" id="NF010001">
    <property type="entry name" value="PRK13474.1"/>
    <property type="match status" value="1"/>
</dbReference>
<dbReference type="PANTHER" id="PTHR10134">
    <property type="entry name" value="CYTOCHROME B-C1 COMPLEX SUBUNIT RIESKE, MITOCHONDRIAL"/>
    <property type="match status" value="1"/>
</dbReference>
<dbReference type="Pfam" id="PF00355">
    <property type="entry name" value="Rieske"/>
    <property type="match status" value="1"/>
</dbReference>
<dbReference type="Pfam" id="PF25471">
    <property type="entry name" value="TM_PetC"/>
    <property type="match status" value="1"/>
</dbReference>
<dbReference type="PRINTS" id="PR00162">
    <property type="entry name" value="RIESKE"/>
</dbReference>
<dbReference type="SUPFAM" id="SSF50022">
    <property type="entry name" value="ISP domain"/>
    <property type="match status" value="1"/>
</dbReference>
<dbReference type="PROSITE" id="PS51296">
    <property type="entry name" value="RIESKE"/>
    <property type="match status" value="1"/>
</dbReference>
<proteinExistence type="inferred from homology"/>
<comment type="function">
    <text evidence="1">Component of the cytochrome b6-f complex, which mediates electron transfer between photosystem II (PSII) and photosystem I (PSI), cyclic electron flow around PSI, and state transitions.</text>
</comment>
<comment type="catalytic activity">
    <reaction evidence="1">
        <text>2 oxidized [plastocyanin] + a plastoquinol + 2 H(+)(in) = 2 reduced [plastocyanin] + a plastoquinone + 4 H(+)(out)</text>
        <dbReference type="Rhea" id="RHEA:22148"/>
        <dbReference type="Rhea" id="RHEA-COMP:9561"/>
        <dbReference type="Rhea" id="RHEA-COMP:9562"/>
        <dbReference type="Rhea" id="RHEA-COMP:10039"/>
        <dbReference type="Rhea" id="RHEA-COMP:10040"/>
        <dbReference type="ChEBI" id="CHEBI:15378"/>
        <dbReference type="ChEBI" id="CHEBI:17757"/>
        <dbReference type="ChEBI" id="CHEBI:29036"/>
        <dbReference type="ChEBI" id="CHEBI:49552"/>
        <dbReference type="ChEBI" id="CHEBI:62192"/>
        <dbReference type="EC" id="7.1.1.6"/>
    </reaction>
</comment>
<comment type="cofactor">
    <cofactor evidence="1">
        <name>[2Fe-2S] cluster</name>
        <dbReference type="ChEBI" id="CHEBI:190135"/>
    </cofactor>
    <text evidence="1">Binds 1 [2Fe-2S] cluster per subunit.</text>
</comment>
<comment type="subunit">
    <text evidence="1">The 4 large subunits of the cytochrome b6-f complex are cytochrome b6, subunit IV (17 kDa polypeptide, PetD), cytochrome f and the Rieske protein, while the 4 small subunits are PetG, PetL, PetM and PetN. The complex functions as a dimer.</text>
</comment>
<comment type="subcellular location">
    <subcellularLocation>
        <location evidence="1">Cellular thylakoid membrane</location>
        <topology evidence="1">Single-pass membrane protein</topology>
    </subcellularLocation>
    <text evidence="1">The transmembrane helix obliquely spans the membrane in one monomer, and its extrinsic C-terminal domain is part of the other monomer.</text>
</comment>
<comment type="miscellaneous">
    <text>The Rieske iron-sulfur protein is a high potential 2Fe-2S protein.</text>
</comment>
<comment type="similarity">
    <text evidence="1">Belongs to the Rieske iron-sulfur protein family.</text>
</comment>
<accession>P14698</accession>
<reference key="1">
    <citation type="journal article" date="1988" name="Proc. Natl. Acad. Sci. U.S.A.">
        <title>Primary structure of cotranscribed genes encoding the Rieske Fe-S and cytochrome f proteins of the cyanobacterium Nostoc PCC 7906.</title>
        <authorList>
            <person name="Kallas T."/>
            <person name="Spiller S."/>
            <person name="Malkin R."/>
        </authorList>
    </citation>
    <scope>NUCLEOTIDE SEQUENCE [GENOMIC DNA]</scope>
</reference>
<gene>
    <name evidence="1" type="primary">petC</name>
</gene>
<sequence>MAQFSESADVPDMGRRQFMNLLTFGTVTGVALGALYPVVKYFIPPASGGAGGGTTAKDELGNDVSLSKFLENRNAGDRALVQGLKGDPTYIVVENKQAIKDYGINAICTHLGCVVPWNVAENKFKCPCHGSQYDETGKVVRGPAPLSLALAHANTVDDKIILSPWTETDFRTGDAPWWA</sequence>
<name>UCRI_DESSP</name>
<feature type="chain" id="PRO_0000127776" description="Cytochrome b6-f complex iron-sulfur subunit">
    <location>
        <begin position="1"/>
        <end position="179"/>
    </location>
</feature>
<feature type="transmembrane region" description="Helical" evidence="1">
    <location>
        <begin position="21"/>
        <end position="43"/>
    </location>
</feature>
<feature type="domain" description="Rieske" evidence="1">
    <location>
        <begin position="61"/>
        <end position="162"/>
    </location>
</feature>
<feature type="binding site" evidence="1">
    <location>
        <position position="108"/>
    </location>
    <ligand>
        <name>[2Fe-2S] cluster</name>
        <dbReference type="ChEBI" id="CHEBI:190135"/>
    </ligand>
</feature>
<feature type="binding site" evidence="1">
    <location>
        <position position="110"/>
    </location>
    <ligand>
        <name>[2Fe-2S] cluster</name>
        <dbReference type="ChEBI" id="CHEBI:190135"/>
    </ligand>
</feature>
<feature type="binding site" evidence="1">
    <location>
        <position position="126"/>
    </location>
    <ligand>
        <name>[2Fe-2S] cluster</name>
        <dbReference type="ChEBI" id="CHEBI:190135"/>
    </ligand>
</feature>
<feature type="binding site" evidence="1">
    <location>
        <position position="129"/>
    </location>
    <ligand>
        <name>[2Fe-2S] cluster</name>
        <dbReference type="ChEBI" id="CHEBI:190135"/>
    </ligand>
</feature>
<feature type="disulfide bond" evidence="1">
    <location>
        <begin position="113"/>
        <end position="128"/>
    </location>
</feature>
<organism>
    <name type="scientific">Desmonostoc sp. (strain PCC 7906)</name>
    <name type="common">Nostoc sp. (strain PCC 7906)</name>
    <dbReference type="NCBI Taxonomy" id="1181"/>
    <lineage>
        <taxon>Bacteria</taxon>
        <taxon>Bacillati</taxon>
        <taxon>Cyanobacteriota</taxon>
        <taxon>Cyanophyceae</taxon>
        <taxon>Nostocales</taxon>
        <taxon>Nostocaceae</taxon>
        <taxon>Desmonostoc</taxon>
    </lineage>
</organism>
<protein>
    <recommendedName>
        <fullName evidence="1">Cytochrome b6-f complex iron-sulfur subunit</fullName>
        <ecNumber evidence="1">7.1.1.6</ecNumber>
    </recommendedName>
    <alternativeName>
        <fullName evidence="1">Plastohydroquinone:plastocyanin oxidoreductase iron-sulfur protein</fullName>
        <shortName evidence="1">ISP</shortName>
        <shortName evidence="1">RISP</shortName>
    </alternativeName>
    <alternativeName>
        <fullName evidence="1">Rieske iron-sulfur protein</fullName>
    </alternativeName>
</protein>